<proteinExistence type="inferred from homology"/>
<comment type="function">
    <text evidence="1">Key component of the proton channel; it plays a direct role in the translocation of protons across the membrane.</text>
</comment>
<comment type="subunit">
    <text evidence="1">F-type ATPases have 2 components, CF(1) - the catalytic core - and CF(0) - the membrane proton channel. CF(1) has five subunits: alpha(3), beta(3), gamma(1), delta(1), epsilon(1). CF(0) has three main subunits: a(1), b(2) and c(9-12). The alpha and beta chains form an alternating ring which encloses part of the gamma chain. CF(1) is attached to CF(0) by a central stalk formed by the gamma and epsilon chains, while a peripheral stalk is formed by the delta and b chains.</text>
</comment>
<comment type="subcellular location">
    <subcellularLocation>
        <location evidence="1">Cell inner membrane</location>
        <topology evidence="1">Multi-pass membrane protein</topology>
    </subcellularLocation>
</comment>
<comment type="similarity">
    <text evidence="1">Belongs to the ATPase A chain family.</text>
</comment>
<sequence>MAATGEALTPQGYIQHHLTNLHVGEGFWTWHIDSLFFSVGLGVLFLWLFRSVGKKATTGVPGKLQCFIEMIVEFVDGSVKETFHGRNPVIAPLALTIFVWVFMMNFMDMIPVDWLPWAAGLAGITHLKVVPTTDLNITFSLALGVFVLIIYYSIKVKGVSGFVKELTLQPFNHKAMIPVNLLLESVTLIAKPISLALRLFGNLYAGELIFILIALMYGANLALSALGVTLQLGWLIFHILVITLQAFIFMMLTIVYLSMAHEDH</sequence>
<evidence type="ECO:0000255" key="1">
    <source>
        <dbReference type="HAMAP-Rule" id="MF_01393"/>
    </source>
</evidence>
<dbReference type="EMBL" id="CP000606">
    <property type="protein sequence ID" value="ABO25714.1"/>
    <property type="molecule type" value="Genomic_DNA"/>
</dbReference>
<dbReference type="RefSeq" id="WP_011867641.1">
    <property type="nucleotide sequence ID" value="NC_009092.1"/>
</dbReference>
<dbReference type="SMR" id="A3QJR6"/>
<dbReference type="STRING" id="323850.Shew_3851"/>
<dbReference type="KEGG" id="slo:Shew_3851"/>
<dbReference type="eggNOG" id="COG0356">
    <property type="taxonomic scope" value="Bacteria"/>
</dbReference>
<dbReference type="HOGENOM" id="CLU_041018_1_0_6"/>
<dbReference type="OrthoDB" id="9789241at2"/>
<dbReference type="Proteomes" id="UP000001558">
    <property type="component" value="Chromosome"/>
</dbReference>
<dbReference type="GO" id="GO:0005886">
    <property type="term" value="C:plasma membrane"/>
    <property type="evidence" value="ECO:0007669"/>
    <property type="project" value="UniProtKB-SubCell"/>
</dbReference>
<dbReference type="GO" id="GO:0045259">
    <property type="term" value="C:proton-transporting ATP synthase complex"/>
    <property type="evidence" value="ECO:0007669"/>
    <property type="project" value="UniProtKB-KW"/>
</dbReference>
<dbReference type="GO" id="GO:0046933">
    <property type="term" value="F:proton-transporting ATP synthase activity, rotational mechanism"/>
    <property type="evidence" value="ECO:0007669"/>
    <property type="project" value="UniProtKB-UniRule"/>
</dbReference>
<dbReference type="GO" id="GO:0042777">
    <property type="term" value="P:proton motive force-driven plasma membrane ATP synthesis"/>
    <property type="evidence" value="ECO:0007669"/>
    <property type="project" value="TreeGrafter"/>
</dbReference>
<dbReference type="CDD" id="cd00310">
    <property type="entry name" value="ATP-synt_Fo_a_6"/>
    <property type="match status" value="1"/>
</dbReference>
<dbReference type="FunFam" id="1.20.120.220:FF:000002">
    <property type="entry name" value="ATP synthase subunit a"/>
    <property type="match status" value="1"/>
</dbReference>
<dbReference type="Gene3D" id="1.20.120.220">
    <property type="entry name" value="ATP synthase, F0 complex, subunit A"/>
    <property type="match status" value="1"/>
</dbReference>
<dbReference type="HAMAP" id="MF_01393">
    <property type="entry name" value="ATP_synth_a_bact"/>
    <property type="match status" value="1"/>
</dbReference>
<dbReference type="InterPro" id="IPR045082">
    <property type="entry name" value="ATP_syn_F0_a_bact/chloroplast"/>
</dbReference>
<dbReference type="InterPro" id="IPR000568">
    <property type="entry name" value="ATP_synth_F0_asu"/>
</dbReference>
<dbReference type="InterPro" id="IPR023011">
    <property type="entry name" value="ATP_synth_F0_asu_AS"/>
</dbReference>
<dbReference type="InterPro" id="IPR035908">
    <property type="entry name" value="F0_ATP_A_sf"/>
</dbReference>
<dbReference type="NCBIfam" id="TIGR01131">
    <property type="entry name" value="ATP_synt_6_or_A"/>
    <property type="match status" value="1"/>
</dbReference>
<dbReference type="NCBIfam" id="NF004477">
    <property type="entry name" value="PRK05815.1-1"/>
    <property type="match status" value="1"/>
</dbReference>
<dbReference type="PANTHER" id="PTHR42823">
    <property type="entry name" value="ATP SYNTHASE SUBUNIT A, CHLOROPLASTIC"/>
    <property type="match status" value="1"/>
</dbReference>
<dbReference type="PANTHER" id="PTHR42823:SF3">
    <property type="entry name" value="ATP SYNTHASE SUBUNIT A, CHLOROPLASTIC"/>
    <property type="match status" value="1"/>
</dbReference>
<dbReference type="Pfam" id="PF00119">
    <property type="entry name" value="ATP-synt_A"/>
    <property type="match status" value="1"/>
</dbReference>
<dbReference type="PRINTS" id="PR00123">
    <property type="entry name" value="ATPASEA"/>
</dbReference>
<dbReference type="SUPFAM" id="SSF81336">
    <property type="entry name" value="F1F0 ATP synthase subunit A"/>
    <property type="match status" value="1"/>
</dbReference>
<dbReference type="PROSITE" id="PS00449">
    <property type="entry name" value="ATPASE_A"/>
    <property type="match status" value="1"/>
</dbReference>
<name>ATP6_SHELP</name>
<reference key="1">
    <citation type="submission" date="2007-03" db="EMBL/GenBank/DDBJ databases">
        <title>Complete sequence of Shewanella loihica PV-4.</title>
        <authorList>
            <consortium name="US DOE Joint Genome Institute"/>
            <person name="Copeland A."/>
            <person name="Lucas S."/>
            <person name="Lapidus A."/>
            <person name="Barry K."/>
            <person name="Detter J.C."/>
            <person name="Glavina del Rio T."/>
            <person name="Hammon N."/>
            <person name="Israni S."/>
            <person name="Dalin E."/>
            <person name="Tice H."/>
            <person name="Pitluck S."/>
            <person name="Chain P."/>
            <person name="Malfatti S."/>
            <person name="Shin M."/>
            <person name="Vergez L."/>
            <person name="Schmutz J."/>
            <person name="Larimer F."/>
            <person name="Land M."/>
            <person name="Hauser L."/>
            <person name="Kyrpides N."/>
            <person name="Mikhailova N."/>
            <person name="Romine M.F."/>
            <person name="Serres G."/>
            <person name="Fredrickson J."/>
            <person name="Tiedje J."/>
            <person name="Richardson P."/>
        </authorList>
    </citation>
    <scope>NUCLEOTIDE SEQUENCE [LARGE SCALE GENOMIC DNA]</scope>
    <source>
        <strain>ATCC BAA-1088 / PV-4</strain>
    </source>
</reference>
<accession>A3QJR6</accession>
<keyword id="KW-0066">ATP synthesis</keyword>
<keyword id="KW-0997">Cell inner membrane</keyword>
<keyword id="KW-1003">Cell membrane</keyword>
<keyword id="KW-0138">CF(0)</keyword>
<keyword id="KW-0375">Hydrogen ion transport</keyword>
<keyword id="KW-0406">Ion transport</keyword>
<keyword id="KW-0472">Membrane</keyword>
<keyword id="KW-1185">Reference proteome</keyword>
<keyword id="KW-0812">Transmembrane</keyword>
<keyword id="KW-1133">Transmembrane helix</keyword>
<keyword id="KW-0813">Transport</keyword>
<feature type="chain" id="PRO_0000362454" description="ATP synthase subunit a">
    <location>
        <begin position="1"/>
        <end position="264"/>
    </location>
</feature>
<feature type="transmembrane region" description="Helical" evidence="1">
    <location>
        <begin position="29"/>
        <end position="49"/>
    </location>
</feature>
<feature type="transmembrane region" description="Helical" evidence="1">
    <location>
        <begin position="90"/>
        <end position="110"/>
    </location>
</feature>
<feature type="transmembrane region" description="Helical" evidence="1">
    <location>
        <begin position="134"/>
        <end position="154"/>
    </location>
</feature>
<feature type="transmembrane region" description="Helical" evidence="1">
    <location>
        <begin position="177"/>
        <end position="197"/>
    </location>
</feature>
<feature type="transmembrane region" description="Helical" evidence="1">
    <location>
        <begin position="208"/>
        <end position="228"/>
    </location>
</feature>
<feature type="transmembrane region" description="Helical" evidence="1">
    <location>
        <begin position="235"/>
        <end position="255"/>
    </location>
</feature>
<protein>
    <recommendedName>
        <fullName evidence="1">ATP synthase subunit a</fullName>
    </recommendedName>
    <alternativeName>
        <fullName evidence="1">ATP synthase F0 sector subunit a</fullName>
    </alternativeName>
    <alternativeName>
        <fullName evidence="1">F-ATPase subunit 6</fullName>
    </alternativeName>
</protein>
<gene>
    <name evidence="1" type="primary">atpB</name>
    <name type="ordered locus">Shew_3851</name>
</gene>
<organism>
    <name type="scientific">Shewanella loihica (strain ATCC BAA-1088 / PV-4)</name>
    <dbReference type="NCBI Taxonomy" id="323850"/>
    <lineage>
        <taxon>Bacteria</taxon>
        <taxon>Pseudomonadati</taxon>
        <taxon>Pseudomonadota</taxon>
        <taxon>Gammaproteobacteria</taxon>
        <taxon>Alteromonadales</taxon>
        <taxon>Shewanellaceae</taxon>
        <taxon>Shewanella</taxon>
    </lineage>
</organism>